<name>RS11_HELPJ</name>
<reference key="1">
    <citation type="journal article" date="1999" name="Nature">
        <title>Genomic sequence comparison of two unrelated isolates of the human gastric pathogen Helicobacter pylori.</title>
        <authorList>
            <person name="Alm R.A."/>
            <person name="Ling L.-S.L."/>
            <person name="Moir D.T."/>
            <person name="King B.L."/>
            <person name="Brown E.D."/>
            <person name="Doig P.C."/>
            <person name="Smith D.R."/>
            <person name="Noonan B."/>
            <person name="Guild B.C."/>
            <person name="deJonge B.L."/>
            <person name="Carmel G."/>
            <person name="Tummino P.J."/>
            <person name="Caruso A."/>
            <person name="Uria-Nickelsen M."/>
            <person name="Mills D.M."/>
            <person name="Ives C."/>
            <person name="Gibson R."/>
            <person name="Merberg D."/>
            <person name="Mills S.D."/>
            <person name="Jiang Q."/>
            <person name="Taylor D.E."/>
            <person name="Vovis G.F."/>
            <person name="Trust T.J."/>
        </authorList>
    </citation>
    <scope>NUCLEOTIDE SEQUENCE [LARGE SCALE GENOMIC DNA]</scope>
    <source>
        <strain>J99 / ATCC 700824</strain>
    </source>
</reference>
<organism>
    <name type="scientific">Helicobacter pylori (strain J99 / ATCC 700824)</name>
    <name type="common">Campylobacter pylori J99</name>
    <dbReference type="NCBI Taxonomy" id="85963"/>
    <lineage>
        <taxon>Bacteria</taxon>
        <taxon>Pseudomonadati</taxon>
        <taxon>Campylobacterota</taxon>
        <taxon>Epsilonproteobacteria</taxon>
        <taxon>Campylobacterales</taxon>
        <taxon>Helicobacteraceae</taxon>
        <taxon>Helicobacter</taxon>
    </lineage>
</organism>
<feature type="chain" id="PRO_0000123158" description="Small ribosomal subunit protein uS11">
    <location>
        <begin position="1"/>
        <end position="131"/>
    </location>
</feature>
<proteinExistence type="inferred from homology"/>
<sequence length="131" mass="14015">MAKRNVTAKKKVVKKNIARGVVYISATFNNTNITITDEMGNVICWSTAGGLGFKGSKKSTPYAAQQAVESALSKAKEHGVKEVGIKVQGPGSGRETAIKSVGATEGVKVLWIKDITPLPHNGCRPPKRRRV</sequence>
<keyword id="KW-0687">Ribonucleoprotein</keyword>
<keyword id="KW-0689">Ribosomal protein</keyword>
<keyword id="KW-0694">RNA-binding</keyword>
<keyword id="KW-0699">rRNA-binding</keyword>
<gene>
    <name evidence="1" type="primary">rpsK</name>
    <name type="ordered locus">jhp_1215</name>
</gene>
<protein>
    <recommendedName>
        <fullName evidence="1">Small ribosomal subunit protein uS11</fullName>
    </recommendedName>
    <alternativeName>
        <fullName evidence="2">30S ribosomal protein S11</fullName>
    </alternativeName>
</protein>
<evidence type="ECO:0000255" key="1">
    <source>
        <dbReference type="HAMAP-Rule" id="MF_01310"/>
    </source>
</evidence>
<evidence type="ECO:0000305" key="2"/>
<comment type="function">
    <text evidence="1">Located on the platform of the 30S subunit, it bridges several disparate RNA helices of the 16S rRNA. Forms part of the Shine-Dalgarno cleft in the 70S ribosome.</text>
</comment>
<comment type="subunit">
    <text evidence="1">Part of the 30S ribosomal subunit. Interacts with proteins S7 and S18. Binds to IF-3.</text>
</comment>
<comment type="similarity">
    <text evidence="1">Belongs to the universal ribosomal protein uS11 family.</text>
</comment>
<accession>Q9ZJT3</accession>
<dbReference type="EMBL" id="AE001439">
    <property type="protein sequence ID" value="AAD06817.1"/>
    <property type="molecule type" value="Genomic_DNA"/>
</dbReference>
<dbReference type="PIR" id="G71832">
    <property type="entry name" value="G71832"/>
</dbReference>
<dbReference type="RefSeq" id="WP_001129289.1">
    <property type="nucleotide sequence ID" value="NZ_CP011330.1"/>
</dbReference>
<dbReference type="SMR" id="Q9ZJT3"/>
<dbReference type="GeneID" id="93237574"/>
<dbReference type="KEGG" id="hpj:jhp_1215"/>
<dbReference type="PATRIC" id="fig|85963.30.peg.1356"/>
<dbReference type="eggNOG" id="COG0100">
    <property type="taxonomic scope" value="Bacteria"/>
</dbReference>
<dbReference type="Proteomes" id="UP000000804">
    <property type="component" value="Chromosome"/>
</dbReference>
<dbReference type="GO" id="GO:1990904">
    <property type="term" value="C:ribonucleoprotein complex"/>
    <property type="evidence" value="ECO:0007669"/>
    <property type="project" value="UniProtKB-KW"/>
</dbReference>
<dbReference type="GO" id="GO:0005840">
    <property type="term" value="C:ribosome"/>
    <property type="evidence" value="ECO:0007669"/>
    <property type="project" value="UniProtKB-KW"/>
</dbReference>
<dbReference type="GO" id="GO:0019843">
    <property type="term" value="F:rRNA binding"/>
    <property type="evidence" value="ECO:0007669"/>
    <property type="project" value="UniProtKB-UniRule"/>
</dbReference>
<dbReference type="GO" id="GO:0003735">
    <property type="term" value="F:structural constituent of ribosome"/>
    <property type="evidence" value="ECO:0007669"/>
    <property type="project" value="InterPro"/>
</dbReference>
<dbReference type="GO" id="GO:0006412">
    <property type="term" value="P:translation"/>
    <property type="evidence" value="ECO:0007669"/>
    <property type="project" value="UniProtKB-UniRule"/>
</dbReference>
<dbReference type="FunFam" id="3.30.420.80:FF:000001">
    <property type="entry name" value="30S ribosomal protein S11"/>
    <property type="match status" value="1"/>
</dbReference>
<dbReference type="Gene3D" id="3.30.420.80">
    <property type="entry name" value="Ribosomal protein S11"/>
    <property type="match status" value="1"/>
</dbReference>
<dbReference type="HAMAP" id="MF_01310">
    <property type="entry name" value="Ribosomal_uS11"/>
    <property type="match status" value="1"/>
</dbReference>
<dbReference type="InterPro" id="IPR001971">
    <property type="entry name" value="Ribosomal_uS11"/>
</dbReference>
<dbReference type="InterPro" id="IPR019981">
    <property type="entry name" value="Ribosomal_uS11_bac-type"/>
</dbReference>
<dbReference type="InterPro" id="IPR018102">
    <property type="entry name" value="Ribosomal_uS11_CS"/>
</dbReference>
<dbReference type="InterPro" id="IPR036967">
    <property type="entry name" value="Ribosomal_uS11_sf"/>
</dbReference>
<dbReference type="NCBIfam" id="NF003698">
    <property type="entry name" value="PRK05309.1"/>
    <property type="match status" value="1"/>
</dbReference>
<dbReference type="NCBIfam" id="TIGR03632">
    <property type="entry name" value="uS11_bact"/>
    <property type="match status" value="1"/>
</dbReference>
<dbReference type="PANTHER" id="PTHR11759">
    <property type="entry name" value="40S RIBOSOMAL PROTEIN S14/30S RIBOSOMAL PROTEIN S11"/>
    <property type="match status" value="1"/>
</dbReference>
<dbReference type="Pfam" id="PF00411">
    <property type="entry name" value="Ribosomal_S11"/>
    <property type="match status" value="1"/>
</dbReference>
<dbReference type="PIRSF" id="PIRSF002131">
    <property type="entry name" value="Ribosomal_S11"/>
    <property type="match status" value="1"/>
</dbReference>
<dbReference type="SUPFAM" id="SSF53137">
    <property type="entry name" value="Translational machinery components"/>
    <property type="match status" value="1"/>
</dbReference>
<dbReference type="PROSITE" id="PS00054">
    <property type="entry name" value="RIBOSOMAL_S11"/>
    <property type="match status" value="1"/>
</dbReference>